<dbReference type="EC" id="5.2.1.8" evidence="1"/>
<dbReference type="EMBL" id="CP000705">
    <property type="protein sequence ID" value="ABQ82917.1"/>
    <property type="molecule type" value="Genomic_DNA"/>
</dbReference>
<dbReference type="RefSeq" id="WP_003666837.1">
    <property type="nucleotide sequence ID" value="NZ_AZDD01000002.1"/>
</dbReference>
<dbReference type="SMR" id="A5VJ93"/>
<dbReference type="STRING" id="557436.Lreu_0652"/>
<dbReference type="KEGG" id="lre:Lreu_0652"/>
<dbReference type="PATRIC" id="fig|557436.17.peg.724"/>
<dbReference type="eggNOG" id="COG0544">
    <property type="taxonomic scope" value="Bacteria"/>
</dbReference>
<dbReference type="HOGENOM" id="CLU_033058_3_2_9"/>
<dbReference type="Proteomes" id="UP000001991">
    <property type="component" value="Chromosome"/>
</dbReference>
<dbReference type="GO" id="GO:0005737">
    <property type="term" value="C:cytoplasm"/>
    <property type="evidence" value="ECO:0007669"/>
    <property type="project" value="UniProtKB-SubCell"/>
</dbReference>
<dbReference type="GO" id="GO:0003755">
    <property type="term" value="F:peptidyl-prolyl cis-trans isomerase activity"/>
    <property type="evidence" value="ECO:0007669"/>
    <property type="project" value="UniProtKB-UniRule"/>
</dbReference>
<dbReference type="GO" id="GO:0044183">
    <property type="term" value="F:protein folding chaperone"/>
    <property type="evidence" value="ECO:0007669"/>
    <property type="project" value="TreeGrafter"/>
</dbReference>
<dbReference type="GO" id="GO:0043022">
    <property type="term" value="F:ribosome binding"/>
    <property type="evidence" value="ECO:0007669"/>
    <property type="project" value="TreeGrafter"/>
</dbReference>
<dbReference type="GO" id="GO:0051083">
    <property type="term" value="P:'de novo' cotranslational protein folding"/>
    <property type="evidence" value="ECO:0007669"/>
    <property type="project" value="TreeGrafter"/>
</dbReference>
<dbReference type="GO" id="GO:0051301">
    <property type="term" value="P:cell division"/>
    <property type="evidence" value="ECO:0007669"/>
    <property type="project" value="UniProtKB-KW"/>
</dbReference>
<dbReference type="GO" id="GO:0061077">
    <property type="term" value="P:chaperone-mediated protein folding"/>
    <property type="evidence" value="ECO:0007669"/>
    <property type="project" value="TreeGrafter"/>
</dbReference>
<dbReference type="GO" id="GO:0015031">
    <property type="term" value="P:protein transport"/>
    <property type="evidence" value="ECO:0007669"/>
    <property type="project" value="UniProtKB-UniRule"/>
</dbReference>
<dbReference type="GO" id="GO:0043335">
    <property type="term" value="P:protein unfolding"/>
    <property type="evidence" value="ECO:0007669"/>
    <property type="project" value="TreeGrafter"/>
</dbReference>
<dbReference type="FunFam" id="3.10.50.40:FF:000001">
    <property type="entry name" value="Trigger factor"/>
    <property type="match status" value="1"/>
</dbReference>
<dbReference type="Gene3D" id="3.10.50.40">
    <property type="match status" value="1"/>
</dbReference>
<dbReference type="Gene3D" id="3.30.70.1050">
    <property type="entry name" value="Trigger factor ribosome-binding domain"/>
    <property type="match status" value="1"/>
</dbReference>
<dbReference type="Gene3D" id="1.10.3120.10">
    <property type="entry name" value="Trigger factor, C-terminal domain"/>
    <property type="match status" value="1"/>
</dbReference>
<dbReference type="HAMAP" id="MF_00303">
    <property type="entry name" value="Trigger_factor_Tig"/>
    <property type="match status" value="1"/>
</dbReference>
<dbReference type="InterPro" id="IPR046357">
    <property type="entry name" value="PPIase_dom_sf"/>
</dbReference>
<dbReference type="InterPro" id="IPR001179">
    <property type="entry name" value="PPIase_FKBP_dom"/>
</dbReference>
<dbReference type="InterPro" id="IPR005215">
    <property type="entry name" value="Trig_fac"/>
</dbReference>
<dbReference type="InterPro" id="IPR008880">
    <property type="entry name" value="Trigger_fac_C"/>
</dbReference>
<dbReference type="InterPro" id="IPR037041">
    <property type="entry name" value="Trigger_fac_C_sf"/>
</dbReference>
<dbReference type="InterPro" id="IPR008881">
    <property type="entry name" value="Trigger_fac_ribosome-bd_bac"/>
</dbReference>
<dbReference type="InterPro" id="IPR036611">
    <property type="entry name" value="Trigger_fac_ribosome-bd_sf"/>
</dbReference>
<dbReference type="InterPro" id="IPR027304">
    <property type="entry name" value="Trigger_fact/SurA_dom_sf"/>
</dbReference>
<dbReference type="NCBIfam" id="TIGR00115">
    <property type="entry name" value="tig"/>
    <property type="match status" value="1"/>
</dbReference>
<dbReference type="PANTHER" id="PTHR30560">
    <property type="entry name" value="TRIGGER FACTOR CHAPERONE AND PEPTIDYL-PROLYL CIS/TRANS ISOMERASE"/>
    <property type="match status" value="1"/>
</dbReference>
<dbReference type="PANTHER" id="PTHR30560:SF3">
    <property type="entry name" value="TRIGGER FACTOR-LIKE PROTEIN TIG, CHLOROPLASTIC"/>
    <property type="match status" value="1"/>
</dbReference>
<dbReference type="Pfam" id="PF00254">
    <property type="entry name" value="FKBP_C"/>
    <property type="match status" value="1"/>
</dbReference>
<dbReference type="Pfam" id="PF05698">
    <property type="entry name" value="Trigger_C"/>
    <property type="match status" value="1"/>
</dbReference>
<dbReference type="Pfam" id="PF05697">
    <property type="entry name" value="Trigger_N"/>
    <property type="match status" value="1"/>
</dbReference>
<dbReference type="PIRSF" id="PIRSF003095">
    <property type="entry name" value="Trigger_factor"/>
    <property type="match status" value="1"/>
</dbReference>
<dbReference type="SUPFAM" id="SSF54534">
    <property type="entry name" value="FKBP-like"/>
    <property type="match status" value="1"/>
</dbReference>
<dbReference type="SUPFAM" id="SSF109998">
    <property type="entry name" value="Triger factor/SurA peptide-binding domain-like"/>
    <property type="match status" value="1"/>
</dbReference>
<dbReference type="SUPFAM" id="SSF102735">
    <property type="entry name" value="Trigger factor ribosome-binding domain"/>
    <property type="match status" value="1"/>
</dbReference>
<dbReference type="PROSITE" id="PS50059">
    <property type="entry name" value="FKBP_PPIASE"/>
    <property type="match status" value="1"/>
</dbReference>
<proteinExistence type="inferred from homology"/>
<organism>
    <name type="scientific">Limosilactobacillus reuteri (strain DSM 20016)</name>
    <name type="common">Lactobacillus reuteri</name>
    <dbReference type="NCBI Taxonomy" id="557436"/>
    <lineage>
        <taxon>Bacteria</taxon>
        <taxon>Bacillati</taxon>
        <taxon>Bacillota</taxon>
        <taxon>Bacilli</taxon>
        <taxon>Lactobacillales</taxon>
        <taxon>Lactobacillaceae</taxon>
        <taxon>Limosilactobacillus</taxon>
    </lineage>
</organism>
<feature type="chain" id="PRO_1000059328" description="Trigger factor">
    <location>
        <begin position="1"/>
        <end position="436"/>
    </location>
</feature>
<feature type="domain" description="PPIase FKBP-type" evidence="1">
    <location>
        <begin position="164"/>
        <end position="249"/>
    </location>
</feature>
<accession>A5VJ93</accession>
<name>TIG_LIMRD</name>
<comment type="function">
    <text evidence="1">Involved in protein export. Acts as a chaperone by maintaining the newly synthesized protein in an open conformation. Functions as a peptidyl-prolyl cis-trans isomerase.</text>
</comment>
<comment type="catalytic activity">
    <reaction evidence="1">
        <text>[protein]-peptidylproline (omega=180) = [protein]-peptidylproline (omega=0)</text>
        <dbReference type="Rhea" id="RHEA:16237"/>
        <dbReference type="Rhea" id="RHEA-COMP:10747"/>
        <dbReference type="Rhea" id="RHEA-COMP:10748"/>
        <dbReference type="ChEBI" id="CHEBI:83833"/>
        <dbReference type="ChEBI" id="CHEBI:83834"/>
        <dbReference type="EC" id="5.2.1.8"/>
    </reaction>
</comment>
<comment type="subcellular location">
    <subcellularLocation>
        <location>Cytoplasm</location>
    </subcellularLocation>
    <text evidence="1">About half TF is bound to the ribosome near the polypeptide exit tunnel while the other half is free in the cytoplasm.</text>
</comment>
<comment type="domain">
    <text evidence="1">Consists of 3 domains; the N-terminus binds the ribosome, the middle domain has PPIase activity, while the C-terminus has intrinsic chaperone activity on its own.</text>
</comment>
<comment type="similarity">
    <text evidence="1">Belongs to the FKBP-type PPIase family. Tig subfamily.</text>
</comment>
<gene>
    <name evidence="1" type="primary">tig</name>
    <name type="ordered locus">Lreu_0652</name>
</gene>
<reference key="1">
    <citation type="journal article" date="2011" name="PLoS Genet.">
        <title>The evolution of host specialization in the vertebrate gut symbiont Lactobacillus reuteri.</title>
        <authorList>
            <person name="Frese S.A."/>
            <person name="Benson A.K."/>
            <person name="Tannock G.W."/>
            <person name="Loach D.M."/>
            <person name="Kim J."/>
            <person name="Zhang M."/>
            <person name="Oh P.L."/>
            <person name="Heng N.C."/>
            <person name="Patil P.B."/>
            <person name="Juge N."/>
            <person name="Mackenzie D.A."/>
            <person name="Pearson B.M."/>
            <person name="Lapidus A."/>
            <person name="Dalin E."/>
            <person name="Tice H."/>
            <person name="Goltsman E."/>
            <person name="Land M."/>
            <person name="Hauser L."/>
            <person name="Ivanova N."/>
            <person name="Kyrpides N.C."/>
            <person name="Walter J."/>
        </authorList>
    </citation>
    <scope>NUCLEOTIDE SEQUENCE [LARGE SCALE GENOMIC DNA]</scope>
    <source>
        <strain>DSM 20016</strain>
    </source>
</reference>
<keyword id="KW-0131">Cell cycle</keyword>
<keyword id="KW-0132">Cell division</keyword>
<keyword id="KW-0143">Chaperone</keyword>
<keyword id="KW-0963">Cytoplasm</keyword>
<keyword id="KW-0413">Isomerase</keyword>
<keyword id="KW-1185">Reference proteome</keyword>
<keyword id="KW-0697">Rotamase</keyword>
<protein>
    <recommendedName>
        <fullName evidence="1">Trigger factor</fullName>
        <shortName evidence="1">TF</shortName>
        <ecNumber evidence="1">5.2.1.8</ecNumber>
    </recommendedName>
    <alternativeName>
        <fullName evidence="1">PPIase</fullName>
    </alternativeName>
</protein>
<sequence length="436" mass="48747">MSAKWERDSDASKGTLTFEIDVDTINKGIDEAFVETRKKITVPGFRKGRVPRQIFNQMYGEESLYQDALNKVLPDAYNEAVKETNIQPVDQPKIDIKSMEKGQPWVLTAEVDVMPEVKLGEYKGMEVPAQDTTVTDADVDDALETKRQQQAELVLKEDKPAEKGDTVVIDYKGSVDGEEFDGGSAENYSLELGSGSFIPGFEDQLIGHNADEDVDVNVTFPEDYHAKNLAGKDALFKVKIHEIKEKQLPELDDDFAKDVDEDVDTLAELKEKTKKQLQEEKDNQAKAAIEDAAINKAVANAEIQDIPQAMLDDDTNRQMQQYLAGMQQQGISPQMYFQITGTKEEDLKKQFANDAAQRVKTNLVLEAIVDDANLDATDEEIAKEISDLAKQYGMEEDAVKKALSKDMLMHDIKIRKAVDLVADSAKQVKDDEKSDK</sequence>
<evidence type="ECO:0000255" key="1">
    <source>
        <dbReference type="HAMAP-Rule" id="MF_00303"/>
    </source>
</evidence>